<reference key="1">
    <citation type="journal article" date="2008" name="PLoS ONE">
        <title>A recalibrated molecular clock and independent origins for the cholera pandemic clones.</title>
        <authorList>
            <person name="Feng L."/>
            <person name="Reeves P.R."/>
            <person name="Lan R."/>
            <person name="Ren Y."/>
            <person name="Gao C."/>
            <person name="Zhou Z."/>
            <person name="Ren Y."/>
            <person name="Cheng J."/>
            <person name="Wang W."/>
            <person name="Wang J."/>
            <person name="Qian W."/>
            <person name="Li D."/>
            <person name="Wang L."/>
        </authorList>
    </citation>
    <scope>NUCLEOTIDE SEQUENCE [LARGE SCALE GENOMIC DNA]</scope>
    <source>
        <strain>M66-2</strain>
    </source>
</reference>
<sequence length="117" mass="13244">MSNIIKALEQEQMKQDLPQFAPGDTVVVQVKVKEGDRERLQAFEGIVIAIRNRGLHSAFTVRKISNGEGVERTFQTHSPVVDSIEVKRRGAVRRAKLYYLRDLSGKAARIKEKLAKK</sequence>
<gene>
    <name evidence="1" type="primary">rplS</name>
    <name type="ordered locus">VCM66_0522</name>
</gene>
<organism>
    <name type="scientific">Vibrio cholerae serotype O1 (strain M66-2)</name>
    <dbReference type="NCBI Taxonomy" id="579112"/>
    <lineage>
        <taxon>Bacteria</taxon>
        <taxon>Pseudomonadati</taxon>
        <taxon>Pseudomonadota</taxon>
        <taxon>Gammaproteobacteria</taxon>
        <taxon>Vibrionales</taxon>
        <taxon>Vibrionaceae</taxon>
        <taxon>Vibrio</taxon>
    </lineage>
</organism>
<name>RL19_VIBCM</name>
<proteinExistence type="inferred from homology"/>
<comment type="function">
    <text evidence="1">This protein is located at the 30S-50S ribosomal subunit interface and may play a role in the structure and function of the aminoacyl-tRNA binding site.</text>
</comment>
<comment type="similarity">
    <text evidence="1">Belongs to the bacterial ribosomal protein bL19 family.</text>
</comment>
<protein>
    <recommendedName>
        <fullName evidence="1">Large ribosomal subunit protein bL19</fullName>
    </recommendedName>
    <alternativeName>
        <fullName evidence="2">50S ribosomal protein L19</fullName>
    </alternativeName>
</protein>
<feature type="chain" id="PRO_1000193916" description="Large ribosomal subunit protein bL19">
    <location>
        <begin position="1"/>
        <end position="117"/>
    </location>
</feature>
<dbReference type="EMBL" id="CP001233">
    <property type="protein sequence ID" value="ACP04847.1"/>
    <property type="molecule type" value="Genomic_DNA"/>
</dbReference>
<dbReference type="RefSeq" id="WP_000065250.1">
    <property type="nucleotide sequence ID" value="NC_012578.1"/>
</dbReference>
<dbReference type="SMR" id="C3LS54"/>
<dbReference type="GeneID" id="94014655"/>
<dbReference type="KEGG" id="vcm:VCM66_0522"/>
<dbReference type="HOGENOM" id="CLU_103507_2_1_6"/>
<dbReference type="Proteomes" id="UP000001217">
    <property type="component" value="Chromosome I"/>
</dbReference>
<dbReference type="GO" id="GO:0022625">
    <property type="term" value="C:cytosolic large ribosomal subunit"/>
    <property type="evidence" value="ECO:0007669"/>
    <property type="project" value="TreeGrafter"/>
</dbReference>
<dbReference type="GO" id="GO:0003735">
    <property type="term" value="F:structural constituent of ribosome"/>
    <property type="evidence" value="ECO:0007669"/>
    <property type="project" value="InterPro"/>
</dbReference>
<dbReference type="GO" id="GO:0006412">
    <property type="term" value="P:translation"/>
    <property type="evidence" value="ECO:0007669"/>
    <property type="project" value="UniProtKB-UniRule"/>
</dbReference>
<dbReference type="FunFam" id="2.30.30.790:FF:000001">
    <property type="entry name" value="50S ribosomal protein L19"/>
    <property type="match status" value="1"/>
</dbReference>
<dbReference type="Gene3D" id="2.30.30.790">
    <property type="match status" value="1"/>
</dbReference>
<dbReference type="HAMAP" id="MF_00402">
    <property type="entry name" value="Ribosomal_bL19"/>
    <property type="match status" value="1"/>
</dbReference>
<dbReference type="InterPro" id="IPR001857">
    <property type="entry name" value="Ribosomal_bL19"/>
</dbReference>
<dbReference type="InterPro" id="IPR018257">
    <property type="entry name" value="Ribosomal_bL19_CS"/>
</dbReference>
<dbReference type="InterPro" id="IPR038657">
    <property type="entry name" value="Ribosomal_bL19_sf"/>
</dbReference>
<dbReference type="InterPro" id="IPR008991">
    <property type="entry name" value="Translation_prot_SH3-like_sf"/>
</dbReference>
<dbReference type="NCBIfam" id="TIGR01024">
    <property type="entry name" value="rplS_bact"/>
    <property type="match status" value="1"/>
</dbReference>
<dbReference type="PANTHER" id="PTHR15680:SF9">
    <property type="entry name" value="LARGE RIBOSOMAL SUBUNIT PROTEIN BL19M"/>
    <property type="match status" value="1"/>
</dbReference>
<dbReference type="PANTHER" id="PTHR15680">
    <property type="entry name" value="RIBOSOMAL PROTEIN L19"/>
    <property type="match status" value="1"/>
</dbReference>
<dbReference type="Pfam" id="PF01245">
    <property type="entry name" value="Ribosomal_L19"/>
    <property type="match status" value="1"/>
</dbReference>
<dbReference type="PIRSF" id="PIRSF002191">
    <property type="entry name" value="Ribosomal_L19"/>
    <property type="match status" value="1"/>
</dbReference>
<dbReference type="PRINTS" id="PR00061">
    <property type="entry name" value="RIBOSOMALL19"/>
</dbReference>
<dbReference type="SUPFAM" id="SSF50104">
    <property type="entry name" value="Translation proteins SH3-like domain"/>
    <property type="match status" value="1"/>
</dbReference>
<dbReference type="PROSITE" id="PS01015">
    <property type="entry name" value="RIBOSOMAL_L19"/>
    <property type="match status" value="1"/>
</dbReference>
<evidence type="ECO:0000255" key="1">
    <source>
        <dbReference type="HAMAP-Rule" id="MF_00402"/>
    </source>
</evidence>
<evidence type="ECO:0000305" key="2"/>
<keyword id="KW-0687">Ribonucleoprotein</keyword>
<keyword id="KW-0689">Ribosomal protein</keyword>
<accession>C3LS54</accession>